<reference key="1">
    <citation type="submission" date="1995-11" db="EMBL/GenBank/DDBJ databases">
        <title>Mitochondrial DNA analysis of the systematic relationships within the Peromyscus maniculatus species group.</title>
        <authorList>
            <person name="Hogan K.M."/>
            <person name="Davis S.K."/>
            <person name="Greenbaum I.F."/>
        </authorList>
    </citation>
    <scope>NUCLEOTIDE SEQUENCE [GENOMIC DNA]</scope>
</reference>
<sequence length="115" mass="13166">MNMLMALLVNITLSTLLIIVAFWLPQLNLYTEKANPYECGFDPMGSARLPFSMKFFLVAITFLLFDLEIALLLPLPWAIQMYNINIMMLTAFILVSVLALGLAYEWVQKGLEWTE</sequence>
<keyword id="KW-0249">Electron transport</keyword>
<keyword id="KW-0472">Membrane</keyword>
<keyword id="KW-0496">Mitochondrion</keyword>
<keyword id="KW-0999">Mitochondrion inner membrane</keyword>
<keyword id="KW-0520">NAD</keyword>
<keyword id="KW-0679">Respiratory chain</keyword>
<keyword id="KW-1278">Translocase</keyword>
<keyword id="KW-0812">Transmembrane</keyword>
<keyword id="KW-1133">Transmembrane helix</keyword>
<keyword id="KW-0813">Transport</keyword>
<keyword id="KW-0830">Ubiquinone</keyword>
<evidence type="ECO:0000250" key="1">
    <source>
        <dbReference type="UniProtKB" id="P03897"/>
    </source>
</evidence>
<evidence type="ECO:0000250" key="2">
    <source>
        <dbReference type="UniProtKB" id="P03898"/>
    </source>
</evidence>
<evidence type="ECO:0000255" key="3"/>
<evidence type="ECO:0000305" key="4"/>
<name>NU3M_PERME</name>
<gene>
    <name evidence="1" type="primary">MT-ND3</name>
    <name type="synonym">MTND3</name>
    <name type="synonym">NADH3</name>
    <name type="synonym">ND3</name>
</gene>
<organism>
    <name type="scientific">Peromyscus melanotis</name>
    <name type="common">Black-eared mouse</name>
    <dbReference type="NCBI Taxonomy" id="42412"/>
    <lineage>
        <taxon>Eukaryota</taxon>
        <taxon>Metazoa</taxon>
        <taxon>Chordata</taxon>
        <taxon>Craniata</taxon>
        <taxon>Vertebrata</taxon>
        <taxon>Euteleostomi</taxon>
        <taxon>Mammalia</taxon>
        <taxon>Eutheria</taxon>
        <taxon>Euarchontoglires</taxon>
        <taxon>Glires</taxon>
        <taxon>Rodentia</taxon>
        <taxon>Myomorpha</taxon>
        <taxon>Muroidea</taxon>
        <taxon>Cricetidae</taxon>
        <taxon>Neotominae</taxon>
        <taxon>Peromyscus</taxon>
    </lineage>
</organism>
<comment type="function">
    <text evidence="1">Core subunit of the mitochondrial membrane respiratory chain NADH dehydrogenase (Complex I) which catalyzes electron transfer from NADH through the respiratory chain, using ubiquinone as an electron acceptor. Essential for the catalytic activity of complex I.</text>
</comment>
<comment type="catalytic activity">
    <reaction evidence="1">
        <text>a ubiquinone + NADH + 5 H(+)(in) = a ubiquinol + NAD(+) + 4 H(+)(out)</text>
        <dbReference type="Rhea" id="RHEA:29091"/>
        <dbReference type="Rhea" id="RHEA-COMP:9565"/>
        <dbReference type="Rhea" id="RHEA-COMP:9566"/>
        <dbReference type="ChEBI" id="CHEBI:15378"/>
        <dbReference type="ChEBI" id="CHEBI:16389"/>
        <dbReference type="ChEBI" id="CHEBI:17976"/>
        <dbReference type="ChEBI" id="CHEBI:57540"/>
        <dbReference type="ChEBI" id="CHEBI:57945"/>
        <dbReference type="EC" id="7.1.1.2"/>
    </reaction>
</comment>
<comment type="subunit">
    <text evidence="1">Core subunit of respiratory chain NADH dehydrogenase (Complex I) which is composed of 45 different subunits. Interacts with TMEM186. Interacts with TMEM242 (By similarity).</text>
</comment>
<comment type="subcellular location">
    <subcellularLocation>
        <location evidence="2">Mitochondrion inner membrane</location>
        <topology evidence="3">Multi-pass membrane protein</topology>
    </subcellularLocation>
</comment>
<comment type="similarity">
    <text evidence="4">Belongs to the complex I subunit 3 family.</text>
</comment>
<protein>
    <recommendedName>
        <fullName evidence="1">NADH-ubiquinone oxidoreductase chain 3</fullName>
        <ecNumber evidence="1">7.1.1.2</ecNumber>
    </recommendedName>
    <alternativeName>
        <fullName>NADH dehydrogenase subunit 3</fullName>
    </alternativeName>
</protein>
<feature type="chain" id="PRO_0000117797" description="NADH-ubiquinone oxidoreductase chain 3">
    <location>
        <begin position="1"/>
        <end position="115"/>
    </location>
</feature>
<feature type="transmembrane region" description="Helical" evidence="3">
    <location>
        <begin position="4"/>
        <end position="24"/>
    </location>
</feature>
<feature type="transmembrane region" description="Helical" evidence="3">
    <location>
        <begin position="55"/>
        <end position="75"/>
    </location>
</feature>
<feature type="transmembrane region" description="Helical" evidence="3">
    <location>
        <begin position="84"/>
        <end position="104"/>
    </location>
</feature>
<proteinExistence type="inferred from homology"/>
<accession>Q95897</accession>
<geneLocation type="mitochondrion"/>
<dbReference type="EC" id="7.1.1.2" evidence="1"/>
<dbReference type="EMBL" id="U40247">
    <property type="protein sequence ID" value="AAB17921.1"/>
    <property type="molecule type" value="Genomic_DNA"/>
</dbReference>
<dbReference type="SMR" id="Q95897"/>
<dbReference type="GO" id="GO:0005743">
    <property type="term" value="C:mitochondrial inner membrane"/>
    <property type="evidence" value="ECO:0000250"/>
    <property type="project" value="UniProtKB"/>
</dbReference>
<dbReference type="GO" id="GO:0030964">
    <property type="term" value="C:NADH dehydrogenase complex"/>
    <property type="evidence" value="ECO:0007669"/>
    <property type="project" value="TreeGrafter"/>
</dbReference>
<dbReference type="GO" id="GO:0008137">
    <property type="term" value="F:NADH dehydrogenase (ubiquinone) activity"/>
    <property type="evidence" value="ECO:0000250"/>
    <property type="project" value="UniProtKB"/>
</dbReference>
<dbReference type="GO" id="GO:0006120">
    <property type="term" value="P:mitochondrial electron transport, NADH to ubiquinone"/>
    <property type="evidence" value="ECO:0000250"/>
    <property type="project" value="UniProtKB"/>
</dbReference>
<dbReference type="FunFam" id="1.20.58.1610:FF:000004">
    <property type="entry name" value="NADH-quinone oxidoreductase subunit A"/>
    <property type="match status" value="1"/>
</dbReference>
<dbReference type="Gene3D" id="1.20.58.1610">
    <property type="entry name" value="NADH:ubiquinone/plastoquinone oxidoreductase, chain 3"/>
    <property type="match status" value="1"/>
</dbReference>
<dbReference type="InterPro" id="IPR000440">
    <property type="entry name" value="NADH_UbQ/plastoQ_OxRdtase_su3"/>
</dbReference>
<dbReference type="InterPro" id="IPR038430">
    <property type="entry name" value="NDAH_ubi_oxred_su3_sf"/>
</dbReference>
<dbReference type="PANTHER" id="PTHR11058">
    <property type="entry name" value="NADH-UBIQUINONE OXIDOREDUCTASE CHAIN 3"/>
    <property type="match status" value="1"/>
</dbReference>
<dbReference type="PANTHER" id="PTHR11058:SF9">
    <property type="entry name" value="NADH-UBIQUINONE OXIDOREDUCTASE CHAIN 3"/>
    <property type="match status" value="1"/>
</dbReference>
<dbReference type="Pfam" id="PF00507">
    <property type="entry name" value="Oxidored_q4"/>
    <property type="match status" value="1"/>
</dbReference>